<organism>
    <name type="scientific">Oryctolagus cuniculus</name>
    <name type="common">Rabbit</name>
    <dbReference type="NCBI Taxonomy" id="9986"/>
    <lineage>
        <taxon>Eukaryota</taxon>
        <taxon>Metazoa</taxon>
        <taxon>Chordata</taxon>
        <taxon>Craniata</taxon>
        <taxon>Vertebrata</taxon>
        <taxon>Euteleostomi</taxon>
        <taxon>Mammalia</taxon>
        <taxon>Eutheria</taxon>
        <taxon>Euarchontoglires</taxon>
        <taxon>Glires</taxon>
        <taxon>Lagomorpha</taxon>
        <taxon>Leporidae</taxon>
        <taxon>Oryctolagus</taxon>
    </lineage>
</organism>
<reference key="1">
    <citation type="journal article" date="1983" name="J. Biol. Chem.">
        <title>The rabbit uteroglobin gene. Structure and interaction with the progesterone receptor.</title>
        <authorList>
            <person name="Bailly A."/>
            <person name="Atger M."/>
            <person name="Atger P."/>
            <person name="Cerbon M.-A."/>
            <person name="Alizon M."/>
            <person name="Vu Hai M.T."/>
            <person name="Logeat F."/>
            <person name="Milgrom E."/>
        </authorList>
    </citation>
    <scope>NUCLEOTIDE SEQUENCE</scope>
</reference>
<reference key="2">
    <citation type="journal article" date="1983" name="Nucleic Acids Res.">
        <title>The uteroglobin gene region: hormonal regulation, repetitive elements and complete nucleotide sequence of the gene.</title>
        <authorList>
            <person name="Suske G."/>
            <person name="Wenz M."/>
            <person name="Cato A.C.B."/>
            <person name="Beato M."/>
        </authorList>
    </citation>
    <scope>NUCLEOTIDE SEQUENCE [GENOMIC DNA]</scope>
</reference>
<reference key="3">
    <citation type="journal article" date="1982" name="Proc. Natl. Acad. Sci. U.S.A.">
        <title>Isolation and structure of the gene for the progesterone-inducible protein uteroglobin.</title>
        <authorList>
            <person name="Menne C."/>
            <person name="Suske G."/>
            <person name="Arnemann J."/>
            <person name="Wenz M."/>
            <person name="Cato A.C.B."/>
            <person name="Beato M."/>
        </authorList>
    </citation>
    <scope>NUCLEOTIDE SEQUENCE [GENOMIC DNA]</scope>
</reference>
<reference key="4">
    <citation type="journal article" date="1981" name="DNA">
        <title>Hormonally regulated mammalian gene expression: steady-state level and nucleotide sequence of rabbit uteroglobin mRNA.</title>
        <authorList>
            <person name="Chandra T."/>
            <person name="Bullock D.W."/>
            <person name="Woo S.L.C."/>
        </authorList>
    </citation>
    <scope>NUCLEOTIDE SEQUENCE [MRNA]</scope>
</reference>
<reference key="5">
    <citation type="journal article" date="1982" name="Prog. Clin. Biol. Res.">
        <title>Characterization and sequence analysis of interspersed repetitive DNA sequences transcribed in X.laevis embryos.</title>
        <authorList>
            <person name="Suske G."/>
            <person name="Menne C."/>
            <person name="Cato A."/>
            <person name="Wenz M."/>
            <person name="Beato M."/>
        </authorList>
    </citation>
    <scope>NUCLEOTIDE SEQUENCE [GENOMIC DNA]</scope>
</reference>
<reference key="6">
    <citation type="journal article" date="1979" name="Biochem. J.">
        <title>N-terminal sequences of uteroglobin and its precursor.</title>
        <authorList>
            <person name="Atger M."/>
            <person name="Mercier J.-C."/>
            <person name="Haze G."/>
            <person name="Fridlansky F."/>
            <person name="Milgrom E."/>
        </authorList>
    </citation>
    <scope>PROTEIN SEQUENCE OF 1-73 (PRECURSOR PROTEIN)</scope>
</reference>
<reference key="7">
    <citation type="journal article" date="1978" name="Biochemistry">
        <title>Amino acid sequence of progesterone-induced rabbit uteroglobin.</title>
        <authorList>
            <person name="Ponstingl H."/>
            <person name="Nieto A."/>
            <person name="Beato M."/>
        </authorList>
    </citation>
    <scope>PROTEIN SEQUENCE OF 22-91</scope>
</reference>
<reference key="8">
    <citation type="journal article" date="1978" name="Proc. Natl. Acad. Sci. U.S.A.">
        <title>Amino acid sequence of a progesterone-binding protein.</title>
        <authorList>
            <person name="Popp R.A."/>
            <person name="Foresman K.R."/>
            <person name="Wise L.D."/>
            <person name="Daniel J.C. Jr."/>
        </authorList>
    </citation>
    <scope>PROTEIN SEQUENCE OF 22-91</scope>
</reference>
<reference key="9">
    <citation type="submission" date="1982-10" db="PIR data bank">
        <authorList>
            <person name="Popp R.A."/>
            <person name="Foresman K.R."/>
            <person name="Wise L.D."/>
            <person name="Daniel J.C. Jr."/>
        </authorList>
    </citation>
    <scope>SEQUENCE REVISION TO 50-62 AND 67-71</scope>
</reference>
<reference key="10">
    <citation type="journal article" date="1985" name="FEBS Lett.">
        <title>Primary structure of rabbit lung uteroglobin as deduced from the nucleotide sequence of a cDNA.</title>
        <authorList>
            <person name="de Haro M.S."/>
            <person name="Nieto A."/>
        </authorList>
    </citation>
    <scope>NUCLEOTIDE SEQUENCE [MRNA] OF 22-91</scope>
</reference>
<reference key="11">
    <citation type="journal article" date="1980" name="Biochem. Biophys. Res. Commun.">
        <title>Cloning of the rabbit uteroglobin structural gene.</title>
        <authorList>
            <person name="Chandra T."/>
            <person name="Woo S.L.C."/>
            <person name="Bullock D.W."/>
        </authorList>
    </citation>
    <scope>NUCLEOTIDE SEQUENCE [GENOMIC DNA] OF 39-77</scope>
</reference>
<reference key="12">
    <citation type="journal article" date="1980" name="Biochem. Biophys. Res. Commun.">
        <title>Bacterial cloning of the rabbit uteroglobin structural gene.</title>
        <authorList>
            <person name="Atger M."/>
            <person name="Perricaudet M."/>
            <person name="Tiollais P."/>
            <person name="Milgrom E."/>
        </authorList>
    </citation>
    <scope>NUCLEOTIDE SEQUENCE [MRNA] OF 53-72</scope>
</reference>
<reference key="13">
    <citation type="journal article" date="1989" name="J. Mol. Biol.">
        <title>Structure and refinement of the oxidized P21 form of uteroglobin at 1.64-A resolution.</title>
        <authorList>
            <person name="Bally R."/>
            <person name="Delettre J."/>
        </authorList>
    </citation>
    <scope>X-RAY CRYSTALLOGRAPHY (1.64 ANGSTROMS)</scope>
    <scope>SUBUNIT</scope>
</reference>
<reference key="14">
    <citation type="journal article" date="1987" name="J. Mol. Biol.">
        <title>Refinement of the C222(1) crystal form of oxidized uteroglobin at 1.34-A resolution.</title>
        <authorList>
            <person name="Morize I."/>
            <person name="Surcouf E."/>
            <person name="Vaney M.C."/>
            <person name="Epelboin Y."/>
            <person name="Buehner M."/>
            <person name="Fridlansky F."/>
            <person name="Milgrom E."/>
            <person name="Mornon J.-P."/>
        </authorList>
    </citation>
    <scope>X-RAY CRYSTALLOGRAPHY (1.34 ANGSTROMS)</scope>
    <scope>SUBUNIT</scope>
</reference>
<reference key="15">
    <citation type="journal article" date="1994" name="Biopolymers">
        <title>Conformation and molecular dynamics calculations on uteroglobin fragment 18-47.</title>
        <authorList>
            <person name="Improta S."/>
            <person name="Pastore A."/>
            <person name="Mammi S."/>
            <person name="Peggion E."/>
        </authorList>
    </citation>
    <scope>STRUCTURE BY NMR OF 39-68</scope>
</reference>
<feature type="signal peptide" evidence="3 5 6">
    <location>
        <begin position="1"/>
        <end position="21"/>
    </location>
</feature>
<feature type="chain" id="PRO_0000036369" description="Uteroglobin" evidence="5">
    <location>
        <begin position="22"/>
        <end position="91"/>
    </location>
</feature>
<feature type="disulfide bond" description="Interchain (with C-90)" evidence="3">
    <location>
        <position position="24"/>
    </location>
</feature>
<feature type="disulfide bond" description="Interchain (with C-24)" evidence="3">
    <location>
        <position position="90"/>
    </location>
</feature>
<feature type="sequence conflict" description="In Ref. 6; AA sequence." evidence="7" ref="6">
    <original>T</original>
    <variation>F</variation>
    <location>
        <position position="6"/>
    </location>
</feature>
<feature type="sequence conflict" description="In Ref. 6; AA sequence." evidence="7" ref="6">
    <original>C</original>
    <variation>G</variation>
    <location>
        <position position="16"/>
    </location>
</feature>
<feature type="sequence conflict" description="In Ref. 5; AAA31500." evidence="7" ref="5">
    <original>L</original>
    <variation>V</variation>
    <location>
        <position position="46"/>
    </location>
</feature>
<feature type="sequence conflict" description="In Ref. 12; AAA31499." evidence="7" ref="12">
    <original>DS</original>
    <variation>NT</variation>
    <location>
        <begin position="67"/>
        <end position="68"/>
    </location>
</feature>
<feature type="sequence conflict" description="In Ref. 7; AA sequence." evidence="7" ref="7">
    <original>E</original>
    <variation>Q</variation>
    <location>
        <position position="82"/>
    </location>
</feature>
<feature type="helix" evidence="8">
    <location>
        <begin position="25"/>
        <end position="36"/>
    </location>
</feature>
<feature type="helix" evidence="8">
    <location>
        <begin position="39"/>
        <end position="47"/>
    </location>
</feature>
<feature type="helix" evidence="8">
    <location>
        <begin position="53"/>
        <end position="66"/>
    </location>
</feature>
<feature type="helix" evidence="8">
    <location>
        <begin position="71"/>
        <end position="85"/>
    </location>
</feature>
<feature type="helix" evidence="8">
    <location>
        <begin position="88"/>
        <end position="90"/>
    </location>
</feature>
<proteinExistence type="evidence at protein level"/>
<gene>
    <name type="primary">SCGB1A1</name>
    <name type="synonym">UGB</name>
    <name type="synonym">UGL</name>
</gene>
<protein>
    <recommendedName>
        <fullName>Uteroglobin</fullName>
    </recommendedName>
    <alternativeName>
        <fullName>Blastokinin</fullName>
    </alternativeName>
    <alternativeName>
        <fullName>Secretoglobin family 1A member 1</fullName>
    </alternativeName>
</protein>
<sequence>MKLAITLALVTLALLCSPASAGICPRFAHVIENLLLGTPSSYETSLKEFEPDDTMKDAGMQMKKVLDSLPQTTRENIMKLTEKIVKSPLCM</sequence>
<keyword id="KW-0002">3D-structure</keyword>
<keyword id="KW-0903">Direct protein sequencing</keyword>
<keyword id="KW-1015">Disulfide bond</keyword>
<keyword id="KW-0446">Lipid-binding</keyword>
<keyword id="KW-0593">Phospholipase A2 inhibitor</keyword>
<keyword id="KW-1185">Reference proteome</keyword>
<keyword id="KW-0964">Secreted</keyword>
<keyword id="KW-0732">Signal</keyword>
<keyword id="KW-0754">Steroid-binding</keyword>
<evidence type="ECO:0000250" key="1">
    <source>
        <dbReference type="UniProtKB" id="P11684"/>
    </source>
</evidence>
<evidence type="ECO:0000269" key="2">
    <source>
    </source>
</evidence>
<evidence type="ECO:0000269" key="3">
    <source>
    </source>
</evidence>
<evidence type="ECO:0000269" key="4">
    <source>
    </source>
</evidence>
<evidence type="ECO:0000269" key="5">
    <source>
    </source>
</evidence>
<evidence type="ECO:0000269" key="6">
    <source>
    </source>
</evidence>
<evidence type="ECO:0000305" key="7"/>
<evidence type="ECO:0007829" key="8">
    <source>
        <dbReference type="PDB" id="1UTG"/>
    </source>
</evidence>
<comment type="function">
    <text>Uteroglobin binds progesterone specifically and with high affinity. It may regulate progesterone concentrations reaching the blastocyst. It is also a potent inhibitor of phospholipase A2.</text>
</comment>
<comment type="subunit">
    <text evidence="1 2 4">Antiparallel homodimer; disulfide-linked (PubMed:2704039, PubMed:3656405). Interaction with LMBR1L is controversial.</text>
</comment>
<comment type="subcellular location">
    <subcellularLocation>
        <location>Secreted</location>
    </subcellularLocation>
</comment>
<comment type="tissue specificity">
    <text>Synthesized in the uterus and lung.</text>
</comment>
<comment type="induction">
    <text>By progesterone.</text>
</comment>
<comment type="similarity">
    <text evidence="7">Belongs to the secretoglobin family.</text>
</comment>
<accession>P02779</accession>
<name>UTER_RABIT</name>
<dbReference type="EMBL" id="K01657">
    <property type="protein sequence ID" value="AAA31497.1"/>
    <property type="molecule type" value="mRNA"/>
</dbReference>
<dbReference type="EMBL" id="J00689">
    <property type="protein sequence ID" value="AAA31495.1"/>
    <property type="molecule type" value="Genomic_DNA"/>
</dbReference>
<dbReference type="EMBL" id="J00688">
    <property type="protein sequence ID" value="AAA31495.1"/>
    <property type="status" value="JOINED"/>
    <property type="molecule type" value="Genomic_DNA"/>
</dbReference>
<dbReference type="EMBL" id="X01423">
    <property type="protein sequence ID" value="CAA25669.1"/>
    <property type="molecule type" value="Genomic_DNA"/>
</dbReference>
<dbReference type="EMBL" id="M32012">
    <property type="protein sequence ID" value="AAA31500.1"/>
    <property type="molecule type" value="Genomic_DNA"/>
</dbReference>
<dbReference type="EMBL" id="M25090">
    <property type="protein sequence ID" value="AAA31500.1"/>
    <property type="status" value="JOINED"/>
    <property type="molecule type" value="Genomic_DNA"/>
</dbReference>
<dbReference type="EMBL" id="M27564">
    <property type="protein sequence ID" value="AAA31496.1"/>
    <property type="molecule type" value="mRNA"/>
</dbReference>
<dbReference type="EMBL" id="M25057">
    <property type="protein sequence ID" value="AAA31498.1"/>
    <property type="molecule type" value="Genomic_DNA"/>
</dbReference>
<dbReference type="EMBL" id="M25038">
    <property type="protein sequence ID" value="AAA31499.1"/>
    <property type="molecule type" value="mRNA"/>
</dbReference>
<dbReference type="PIR" id="A92391">
    <property type="entry name" value="UGRB"/>
</dbReference>
<dbReference type="RefSeq" id="NP_001075706.1">
    <property type="nucleotide sequence ID" value="NM_001082237.1"/>
</dbReference>
<dbReference type="PDB" id="1UTG">
    <property type="method" value="X-ray"/>
    <property type="resolution" value="1.34 A"/>
    <property type="chains" value="A=22-91"/>
</dbReference>
<dbReference type="PDB" id="2UTG">
    <property type="method" value="X-ray"/>
    <property type="resolution" value="1.64 A"/>
    <property type="chains" value="A/B=22-91"/>
</dbReference>
<dbReference type="PDBsum" id="1UTG"/>
<dbReference type="PDBsum" id="2UTG"/>
<dbReference type="SMR" id="P02779"/>
<dbReference type="FunCoup" id="P02779">
    <property type="interactions" value="10"/>
</dbReference>
<dbReference type="PaxDb" id="9986-ENSOCUP00000012245"/>
<dbReference type="Ensembl" id="ENSOCUT00000014246.3">
    <property type="protein sequence ID" value="ENSOCUP00000012245.2"/>
    <property type="gene ID" value="ENSOCUG00000005922.3"/>
</dbReference>
<dbReference type="GeneID" id="100009053"/>
<dbReference type="KEGG" id="ocu:100009053"/>
<dbReference type="CTD" id="7356"/>
<dbReference type="eggNOG" id="ENOG502SXFT">
    <property type="taxonomic scope" value="Eukaryota"/>
</dbReference>
<dbReference type="GeneTree" id="ENSGT00950000183045"/>
<dbReference type="HOGENOM" id="CLU_166234_1_0_1"/>
<dbReference type="InParanoid" id="P02779"/>
<dbReference type="OMA" id="MKIAITI"/>
<dbReference type="OrthoDB" id="9585556at2759"/>
<dbReference type="TreeFam" id="TF338407"/>
<dbReference type="EvolutionaryTrace" id="P02779"/>
<dbReference type="Proteomes" id="UP000001811">
    <property type="component" value="Unplaced"/>
</dbReference>
<dbReference type="Bgee" id="ENSOCUG00000005922">
    <property type="expression patterns" value="Expressed in upper lobe of left lung and 18 other cell types or tissues"/>
</dbReference>
<dbReference type="GO" id="GO:0005737">
    <property type="term" value="C:cytoplasm"/>
    <property type="evidence" value="ECO:0007669"/>
    <property type="project" value="TreeGrafter"/>
</dbReference>
<dbReference type="GO" id="GO:0005615">
    <property type="term" value="C:extracellular space"/>
    <property type="evidence" value="ECO:0007669"/>
    <property type="project" value="TreeGrafter"/>
</dbReference>
<dbReference type="GO" id="GO:0019834">
    <property type="term" value="F:phospholipase A2 inhibitor activity"/>
    <property type="evidence" value="ECO:0007669"/>
    <property type="project" value="UniProtKB-KW"/>
</dbReference>
<dbReference type="GO" id="GO:0005496">
    <property type="term" value="F:steroid binding"/>
    <property type="evidence" value="ECO:0007669"/>
    <property type="project" value="UniProtKB-KW"/>
</dbReference>
<dbReference type="GO" id="GO:0007165">
    <property type="term" value="P:signal transduction"/>
    <property type="evidence" value="ECO:0007669"/>
    <property type="project" value="InterPro"/>
</dbReference>
<dbReference type="CDD" id="cd00633">
    <property type="entry name" value="Secretoglobin"/>
    <property type="match status" value="1"/>
</dbReference>
<dbReference type="FunFam" id="1.10.210.10:FF:000001">
    <property type="entry name" value="Uteroglobin"/>
    <property type="match status" value="1"/>
</dbReference>
<dbReference type="Gene3D" id="1.10.210.10">
    <property type="entry name" value="Secretoglobin"/>
    <property type="match status" value="1"/>
</dbReference>
<dbReference type="InterPro" id="IPR016126">
    <property type="entry name" value="Secretoglobin"/>
</dbReference>
<dbReference type="InterPro" id="IPR043215">
    <property type="entry name" value="Secretoglobin_1C-like"/>
</dbReference>
<dbReference type="InterPro" id="IPR035960">
    <property type="entry name" value="Secretoglobin_sf"/>
</dbReference>
<dbReference type="InterPro" id="IPR000329">
    <property type="entry name" value="Uteroglobin"/>
</dbReference>
<dbReference type="PANTHER" id="PTHR10136">
    <property type="entry name" value="SECRETOGLOBIN FAMILY 1 MEMBER"/>
    <property type="match status" value="1"/>
</dbReference>
<dbReference type="PANTHER" id="PTHR10136:SF6">
    <property type="entry name" value="UTEROGLOBIN"/>
    <property type="match status" value="1"/>
</dbReference>
<dbReference type="Pfam" id="PF01099">
    <property type="entry name" value="Uteroglobin"/>
    <property type="match status" value="1"/>
</dbReference>
<dbReference type="PRINTS" id="PR00486">
    <property type="entry name" value="UTEROGLOBIN"/>
</dbReference>
<dbReference type="SMART" id="SM00096">
    <property type="entry name" value="UTG"/>
    <property type="match status" value="1"/>
</dbReference>
<dbReference type="SUPFAM" id="SSF48201">
    <property type="entry name" value="Uteroglobin-like"/>
    <property type="match status" value="1"/>
</dbReference>
<dbReference type="PROSITE" id="PS51311">
    <property type="entry name" value="SCGB"/>
    <property type="match status" value="1"/>
</dbReference>